<evidence type="ECO:0000255" key="1">
    <source>
        <dbReference type="HAMAP-Rule" id="MF_00695"/>
    </source>
</evidence>
<name>HFLD_SHESW</name>
<reference key="1">
    <citation type="submission" date="2006-12" db="EMBL/GenBank/DDBJ databases">
        <title>Complete sequence of Shewanella sp. W3-18-1.</title>
        <authorList>
            <consortium name="US DOE Joint Genome Institute"/>
            <person name="Copeland A."/>
            <person name="Lucas S."/>
            <person name="Lapidus A."/>
            <person name="Barry K."/>
            <person name="Detter J.C."/>
            <person name="Glavina del Rio T."/>
            <person name="Hammon N."/>
            <person name="Israni S."/>
            <person name="Dalin E."/>
            <person name="Tice H."/>
            <person name="Pitluck S."/>
            <person name="Chain P."/>
            <person name="Malfatti S."/>
            <person name="Shin M."/>
            <person name="Vergez L."/>
            <person name="Schmutz J."/>
            <person name="Larimer F."/>
            <person name="Land M."/>
            <person name="Hauser L."/>
            <person name="Kyrpides N."/>
            <person name="Lykidis A."/>
            <person name="Tiedje J."/>
            <person name="Richardson P."/>
        </authorList>
    </citation>
    <scope>NUCLEOTIDE SEQUENCE [LARGE SCALE GENOMIC DNA]</scope>
    <source>
        <strain>W3-18-1</strain>
    </source>
</reference>
<protein>
    <recommendedName>
        <fullName evidence="1">High frequency lysogenization protein HflD homolog</fullName>
    </recommendedName>
</protein>
<dbReference type="EMBL" id="CP000503">
    <property type="protein sequence ID" value="ABM24612.1"/>
    <property type="molecule type" value="Genomic_DNA"/>
</dbReference>
<dbReference type="RefSeq" id="WP_011789109.1">
    <property type="nucleotide sequence ID" value="NC_008750.1"/>
</dbReference>
<dbReference type="SMR" id="A1RIW7"/>
<dbReference type="GeneID" id="67443768"/>
<dbReference type="KEGG" id="shw:Sputw3181_1775"/>
<dbReference type="HOGENOM" id="CLU_098920_0_0_6"/>
<dbReference type="Proteomes" id="UP000002597">
    <property type="component" value="Chromosome"/>
</dbReference>
<dbReference type="GO" id="GO:0005737">
    <property type="term" value="C:cytoplasm"/>
    <property type="evidence" value="ECO:0007669"/>
    <property type="project" value="UniProtKB-SubCell"/>
</dbReference>
<dbReference type="GO" id="GO:0005886">
    <property type="term" value="C:plasma membrane"/>
    <property type="evidence" value="ECO:0007669"/>
    <property type="project" value="UniProtKB-SubCell"/>
</dbReference>
<dbReference type="FunFam" id="1.10.3890.10:FF:000002">
    <property type="entry name" value="High frequency lysogenization protein HflD homolog"/>
    <property type="match status" value="1"/>
</dbReference>
<dbReference type="Gene3D" id="1.10.3890.10">
    <property type="entry name" value="HflD-like"/>
    <property type="match status" value="1"/>
</dbReference>
<dbReference type="HAMAP" id="MF_00695">
    <property type="entry name" value="HflD_protein"/>
    <property type="match status" value="1"/>
</dbReference>
<dbReference type="InterPro" id="IPR007451">
    <property type="entry name" value="HflD"/>
</dbReference>
<dbReference type="InterPro" id="IPR035932">
    <property type="entry name" value="HflD-like_sf"/>
</dbReference>
<dbReference type="NCBIfam" id="NF001246">
    <property type="entry name" value="PRK00218.1-2"/>
    <property type="match status" value="1"/>
</dbReference>
<dbReference type="NCBIfam" id="NF001248">
    <property type="entry name" value="PRK00218.1-4"/>
    <property type="match status" value="1"/>
</dbReference>
<dbReference type="PANTHER" id="PTHR38100">
    <property type="entry name" value="HIGH FREQUENCY LYSOGENIZATION PROTEIN HFLD"/>
    <property type="match status" value="1"/>
</dbReference>
<dbReference type="PANTHER" id="PTHR38100:SF1">
    <property type="entry name" value="HIGH FREQUENCY LYSOGENIZATION PROTEIN HFLD"/>
    <property type="match status" value="1"/>
</dbReference>
<dbReference type="Pfam" id="PF04356">
    <property type="entry name" value="DUF489"/>
    <property type="match status" value="1"/>
</dbReference>
<dbReference type="SUPFAM" id="SSF101322">
    <property type="entry name" value="YcfC-like"/>
    <property type="match status" value="1"/>
</dbReference>
<gene>
    <name evidence="1" type="primary">hflD</name>
    <name type="ordered locus">Sputw3181_1775</name>
</gene>
<feature type="chain" id="PRO_1000045445" description="High frequency lysogenization protein HflD homolog">
    <location>
        <begin position="1"/>
        <end position="205"/>
    </location>
</feature>
<comment type="subcellular location">
    <subcellularLocation>
        <location>Cytoplasm</location>
    </subcellularLocation>
    <subcellularLocation>
        <location evidence="1">Cell inner membrane</location>
        <topology evidence="1">Peripheral membrane protein</topology>
        <orientation evidence="1">Cytoplasmic side</orientation>
    </subcellularLocation>
</comment>
<comment type="similarity">
    <text evidence="1">Belongs to the HflD family.</text>
</comment>
<sequence length="205" mass="22708">MNEQLINRTMAFAGILQAIAQVQHLARHGELDNAELAASLNTILVTNPDNTADVYPDKIVLQKGYKLILNQLGDSSQKDVEITRYLVGVLALERKLVRSNSGLGMLAERINQVNRQLHHFAITDEQVVANLASIYSDIISNLGPKIQISGNPVCLQRPIVQHKIRALLLAAIRSAVLWRQLGGKRRHLVFARKAIVDTAKKSLTL</sequence>
<keyword id="KW-0997">Cell inner membrane</keyword>
<keyword id="KW-1003">Cell membrane</keyword>
<keyword id="KW-0963">Cytoplasm</keyword>
<keyword id="KW-0472">Membrane</keyword>
<accession>A1RIW7</accession>
<organism>
    <name type="scientific">Shewanella sp. (strain W3-18-1)</name>
    <dbReference type="NCBI Taxonomy" id="351745"/>
    <lineage>
        <taxon>Bacteria</taxon>
        <taxon>Pseudomonadati</taxon>
        <taxon>Pseudomonadota</taxon>
        <taxon>Gammaproteobacteria</taxon>
        <taxon>Alteromonadales</taxon>
        <taxon>Shewanellaceae</taxon>
        <taxon>Shewanella</taxon>
    </lineage>
</organism>
<proteinExistence type="inferred from homology"/>